<sequence>MVREEVAGSTQTLQWKCVESRVDSKRLYYGRFILSPLRKGQADTVGIALRRALLGEIEGTCITRAKFGSVPHEYSTIAGIEESVQEILLNLKEIVLRSNLYGVRDASICVKGPRYITAQDIILPPSVEIVDTAQPIANLTEPIDFCIDLQIKRDRGYQTELRKNYQDGSYPIDAVSMPVRNVNYSIFSCGNGNEKHEILFLEIWTNGSLTPKEALYEASRNLIDLFLPFLHAEEEGASFEENKNRFTPPLFTFQKRLTNLKKNKKGIPLNCIFIDQLELTSRTYNCXKRXXXXTLLDLLSKTEEDLLRIDSFRMEDRKHIWDTLEKHLPIDLLKNKLSF</sequence>
<proteinExistence type="inferred from homology"/>
<keyword id="KW-0150">Chloroplast</keyword>
<keyword id="KW-0240">DNA-directed RNA polymerase</keyword>
<keyword id="KW-0548">Nucleotidyltransferase</keyword>
<keyword id="KW-0934">Plastid</keyword>
<keyword id="KW-0804">Transcription</keyword>
<keyword id="KW-0808">Transferase</keyword>
<protein>
    <recommendedName>
        <fullName evidence="1">DNA-directed RNA polymerase subunit alpha</fullName>
        <shortName evidence="1">PEP</shortName>
        <ecNumber evidence="1">2.7.7.6</ecNumber>
    </recommendedName>
    <alternativeName>
        <fullName evidence="1">Plastid-encoded RNA polymerase subunit alpha</fullName>
        <shortName evidence="1">RNA polymerase subunit alpha</shortName>
    </alternativeName>
</protein>
<evidence type="ECO:0000255" key="1">
    <source>
        <dbReference type="HAMAP-Rule" id="MF_00059"/>
    </source>
</evidence>
<organism>
    <name type="scientific">Crithopsis delileana</name>
    <dbReference type="NCBI Taxonomy" id="37674"/>
    <lineage>
        <taxon>Eukaryota</taxon>
        <taxon>Viridiplantae</taxon>
        <taxon>Streptophyta</taxon>
        <taxon>Embryophyta</taxon>
        <taxon>Tracheophyta</taxon>
        <taxon>Spermatophyta</taxon>
        <taxon>Magnoliopsida</taxon>
        <taxon>Liliopsida</taxon>
        <taxon>Poales</taxon>
        <taxon>Poaceae</taxon>
        <taxon>BOP clade</taxon>
        <taxon>Pooideae</taxon>
        <taxon>Triticodae</taxon>
        <taxon>Triticeae</taxon>
        <taxon>Hordeinae</taxon>
        <taxon>Crithopsis</taxon>
    </lineage>
</organism>
<feature type="chain" id="PRO_0000175448" description="DNA-directed RNA polymerase subunit alpha">
    <location>
        <begin position="1"/>
        <end position="339"/>
    </location>
</feature>
<feature type="region of interest" description="Alpha N-terminal domain (alpha-NTD)" evidence="1">
    <location>
        <begin position="1"/>
        <end position="233"/>
    </location>
</feature>
<feature type="region of interest" description="Alpha C-terminal domain (alpha-CTD)" evidence="1">
    <location>
        <begin position="264"/>
        <end position="339"/>
    </location>
</feature>
<gene>
    <name evidence="1" type="primary">rpoA</name>
</gene>
<name>RPOA_CRIDE</name>
<geneLocation type="chloroplast"/>
<comment type="function">
    <text evidence="1">DNA-dependent RNA polymerase catalyzes the transcription of DNA into RNA using the four ribonucleoside triphosphates as substrates.</text>
</comment>
<comment type="catalytic activity">
    <reaction evidence="1">
        <text>RNA(n) + a ribonucleoside 5'-triphosphate = RNA(n+1) + diphosphate</text>
        <dbReference type="Rhea" id="RHEA:21248"/>
        <dbReference type="Rhea" id="RHEA-COMP:14527"/>
        <dbReference type="Rhea" id="RHEA-COMP:17342"/>
        <dbReference type="ChEBI" id="CHEBI:33019"/>
        <dbReference type="ChEBI" id="CHEBI:61557"/>
        <dbReference type="ChEBI" id="CHEBI:140395"/>
        <dbReference type="EC" id="2.7.7.6"/>
    </reaction>
</comment>
<comment type="subunit">
    <text evidence="1">In plastids the minimal PEP RNA polymerase catalytic core is composed of four subunits: alpha, beta, beta', and beta''. When a (nuclear-encoded) sigma factor is associated with the core the holoenzyme is formed, which can initiate transcription.</text>
</comment>
<comment type="subcellular location">
    <subcellularLocation>
        <location>Plastid</location>
        <location>Chloroplast</location>
    </subcellularLocation>
</comment>
<comment type="domain">
    <text evidence="1">The N-terminal domain is essential for RNAP assembly and basal transcription, whereas the C-terminal domain is involved in interaction with transcriptional regulators and with upstream promoter elements.</text>
</comment>
<comment type="similarity">
    <text evidence="1">Belongs to the RNA polymerase alpha chain family.</text>
</comment>
<dbReference type="EC" id="2.7.7.6" evidence="1"/>
<dbReference type="EMBL" id="Z77751">
    <property type="protein sequence ID" value="CAB01330.1"/>
    <property type="molecule type" value="Genomic_DNA"/>
</dbReference>
<dbReference type="GO" id="GO:0009507">
    <property type="term" value="C:chloroplast"/>
    <property type="evidence" value="ECO:0007669"/>
    <property type="project" value="UniProtKB-SubCell"/>
</dbReference>
<dbReference type="GO" id="GO:0000428">
    <property type="term" value="C:DNA-directed RNA polymerase complex"/>
    <property type="evidence" value="ECO:0007669"/>
    <property type="project" value="UniProtKB-KW"/>
</dbReference>
<dbReference type="GO" id="GO:0005739">
    <property type="term" value="C:mitochondrion"/>
    <property type="evidence" value="ECO:0007669"/>
    <property type="project" value="GOC"/>
</dbReference>
<dbReference type="GO" id="GO:0003677">
    <property type="term" value="F:DNA binding"/>
    <property type="evidence" value="ECO:0007669"/>
    <property type="project" value="UniProtKB-UniRule"/>
</dbReference>
<dbReference type="GO" id="GO:0003899">
    <property type="term" value="F:DNA-directed RNA polymerase activity"/>
    <property type="evidence" value="ECO:0007669"/>
    <property type="project" value="UniProtKB-UniRule"/>
</dbReference>
<dbReference type="GO" id="GO:0046983">
    <property type="term" value="F:protein dimerization activity"/>
    <property type="evidence" value="ECO:0007669"/>
    <property type="project" value="InterPro"/>
</dbReference>
<dbReference type="GO" id="GO:0006351">
    <property type="term" value="P:DNA-templated transcription"/>
    <property type="evidence" value="ECO:0007669"/>
    <property type="project" value="UniProtKB-UniRule"/>
</dbReference>
<dbReference type="CDD" id="cd06928">
    <property type="entry name" value="RNAP_alpha_NTD"/>
    <property type="match status" value="1"/>
</dbReference>
<dbReference type="FunFam" id="2.170.120.12:FF:000001">
    <property type="entry name" value="DNA-directed RNA polymerase subunit alpha"/>
    <property type="match status" value="1"/>
</dbReference>
<dbReference type="Gene3D" id="1.10.150.20">
    <property type="entry name" value="5' to 3' exonuclease, C-terminal subdomain"/>
    <property type="match status" value="1"/>
</dbReference>
<dbReference type="Gene3D" id="2.170.120.12">
    <property type="entry name" value="DNA-directed RNA polymerase, insert domain"/>
    <property type="match status" value="1"/>
</dbReference>
<dbReference type="Gene3D" id="3.30.1360.10">
    <property type="entry name" value="RNA polymerase, RBP11-like subunit"/>
    <property type="match status" value="1"/>
</dbReference>
<dbReference type="HAMAP" id="MF_00059">
    <property type="entry name" value="RNApol_bact_RpoA"/>
    <property type="match status" value="1"/>
</dbReference>
<dbReference type="InterPro" id="IPR011262">
    <property type="entry name" value="DNA-dir_RNA_pol_insert"/>
</dbReference>
<dbReference type="InterPro" id="IPR011263">
    <property type="entry name" value="DNA-dir_RNA_pol_RpoA/D/Rpb3"/>
</dbReference>
<dbReference type="InterPro" id="IPR011773">
    <property type="entry name" value="DNA-dir_RpoA"/>
</dbReference>
<dbReference type="InterPro" id="IPR036603">
    <property type="entry name" value="RBP11-like"/>
</dbReference>
<dbReference type="InterPro" id="IPR011260">
    <property type="entry name" value="RNAP_asu_C"/>
</dbReference>
<dbReference type="InterPro" id="IPR036643">
    <property type="entry name" value="RNApol_insert_sf"/>
</dbReference>
<dbReference type="NCBIfam" id="TIGR02027">
    <property type="entry name" value="rpoA"/>
    <property type="match status" value="1"/>
</dbReference>
<dbReference type="Pfam" id="PF01000">
    <property type="entry name" value="RNA_pol_A_bac"/>
    <property type="match status" value="1"/>
</dbReference>
<dbReference type="Pfam" id="PF03118">
    <property type="entry name" value="RNA_pol_A_CTD"/>
    <property type="match status" value="1"/>
</dbReference>
<dbReference type="Pfam" id="PF01193">
    <property type="entry name" value="RNA_pol_L"/>
    <property type="match status" value="1"/>
</dbReference>
<dbReference type="SMART" id="SM00662">
    <property type="entry name" value="RPOLD"/>
    <property type="match status" value="1"/>
</dbReference>
<dbReference type="SUPFAM" id="SSF47789">
    <property type="entry name" value="C-terminal domain of RNA polymerase alpha subunit"/>
    <property type="match status" value="1"/>
</dbReference>
<dbReference type="SUPFAM" id="SSF56553">
    <property type="entry name" value="Insert subdomain of RNA polymerase alpha subunit"/>
    <property type="match status" value="1"/>
</dbReference>
<dbReference type="SUPFAM" id="SSF55257">
    <property type="entry name" value="RBP11-like subunits of RNA polymerase"/>
    <property type="match status" value="1"/>
</dbReference>
<reference key="1">
    <citation type="journal article" date="1997" name="Mol. Phylogenet. Evol.">
        <title>Phylogenetic analysis of the Triticeae (Poaceae) based on rpoA sequence data.</title>
        <authorList>
            <person name="Petersen G."/>
            <person name="Seberg O."/>
        </authorList>
    </citation>
    <scope>NUCLEOTIDE SEQUENCE [GENOMIC DNA]</scope>
    <source>
        <strain>H5558</strain>
        <tissue>Leaf</tissue>
    </source>
</reference>
<accession>P92225</accession>